<organism>
    <name type="scientific">Acidianus filamentous virus 1 (isolate United States/Yellowstone)</name>
    <name type="common">AFV-1</name>
    <dbReference type="NCBI Taxonomy" id="654909"/>
    <lineage>
        <taxon>Viruses</taxon>
        <taxon>Adnaviria</taxon>
        <taxon>Zilligvirae</taxon>
        <taxon>Taleaviricota</taxon>
        <taxon>Tokiviricetes</taxon>
        <taxon>Ligamenvirales</taxon>
        <taxon>Ungulaviridae</taxon>
        <taxon>Captovirus</taxon>
        <taxon>Acidianus filamentous virus 1</taxon>
    </lineage>
</organism>
<proteinExistence type="evidence at protein level"/>
<accession>Q70LC7</accession>
<organismHost>
    <name type="scientific">Acidianus hospitalis</name>
    <dbReference type="NCBI Taxonomy" id="563177"/>
</organismHost>
<organismHost>
    <name type="scientific">Acidianus infernus</name>
    <dbReference type="NCBI Taxonomy" id="12915"/>
</organismHost>
<keyword id="KW-0002">3D-structure</keyword>
<keyword id="KW-0238">DNA-binding</keyword>
<keyword id="KW-1185">Reference proteome</keyword>
<keyword id="KW-0946">Virion</keyword>
<protein>
    <recommendedName>
        <fullName evidence="4">Major capsid protein 2</fullName>
    </recommendedName>
    <alternativeName>
        <fullName>MCP2</fullName>
    </alternativeName>
</protein>
<comment type="function">
    <text evidence="2 5">Self-assembles to form a helical, filamentous nucleocapsid mesuring 900 nm in length and 24 nm in width (Probable) (PubMed:19934032). Together with capsid protein 1, wraps arounds the DNA and maintains it in an A-form (Probable). Capsid proteins probably maintain the DNA in A-form by non-specific desolvation and specific coordination of the DNA phosphate groups by positively charged residues (Probable). This certainly protects the viral DNA under conditions such as the extreme desiccation of its host (Probable).</text>
</comment>
<comment type="subunit">
    <text evidence="2 3">Heterodimer composed of major capsid protein 1 and major capsid protein 2.</text>
</comment>
<comment type="subcellular location">
    <subcellularLocation>
        <location evidence="2">Virion</location>
    </subcellularLocation>
</comment>
<comment type="domain">
    <text evidence="1">The N-terminus projects into a DNA groove.</text>
</comment>
<gene>
    <name type="ORF">ORF132</name>
</gene>
<reference key="1">
    <citation type="journal article" date="2003" name="Virology">
        <title>AFV1, a novel virus infecting hyperthermophilic archaea of the genus acidianus.</title>
        <authorList>
            <person name="Bettstetter M."/>
            <person name="Peng X."/>
            <person name="Garrett R.A."/>
            <person name="Prangishvili D."/>
        </authorList>
    </citation>
    <scope>NUCLEOTIDE SEQUENCE [GENOMIC DNA]</scope>
</reference>
<reference key="2">
    <citation type="journal article" date="2020" name="Proc. Natl. Acad. Sci. U.S.A.">
        <title>Structures of filamentous viruses infecting hyperthermophilic archaea explain DNA stabilization in extreme environments.</title>
        <authorList>
            <person name="Wang F."/>
            <person name="Baquero D.P."/>
            <person name="Beltran L.C."/>
            <person name="Su Z."/>
            <person name="Osinski T."/>
            <person name="Zheng W."/>
            <person name="Prangishvili D."/>
            <person name="Krupovic M."/>
            <person name="Egelman E.H."/>
        </authorList>
    </citation>
    <scope>SUBUNIT</scope>
    <scope>FUNCTION</scope>
</reference>
<reference evidence="6" key="3">
    <citation type="journal article" date="2009" name="Proc. Natl. Acad. Sci. U.S.A.">
        <title>Acidianus filamentous virus 1 coat proteins display a helical fold spanning the filamentous archaeal viruses lineage.</title>
        <authorList>
            <person name="Goulet A."/>
            <person name="Blangy S."/>
            <person name="Redder P."/>
            <person name="Prangishvili D."/>
            <person name="Felisberto-Rodrigues C."/>
            <person name="Forterre P."/>
            <person name="Campanacci V."/>
            <person name="Cambillau C."/>
        </authorList>
    </citation>
    <scope>X-RAY CRYSTALLOGRAPHY (1.95 ANGSTROMS) OF 51-132</scope>
    <scope>SUBCELLULAR LOCATION</scope>
    <scope>FUNCTION</scope>
    <scope>SUBUNIT</scope>
</reference>
<reference evidence="7" key="4">
    <citation type="journal article" date="2017" name="Elife">
        <title>Model for a novel membrane envelope in a filamentous hyperthermophilic virus.</title>
        <authorList>
            <person name="Kasson P."/>
            <person name="DiMaio F."/>
            <person name="Yu X."/>
            <person name="Lucas-Staat S."/>
            <person name="Krupovic M."/>
            <person name="Schouten S."/>
            <person name="Prangishvili D."/>
            <person name="Egelman E.H."/>
        </authorList>
    </citation>
    <scope>STRUCTURE BY ELECTRON MICROSCOPY (4.50 ANGSTROMS)</scope>
</reference>
<evidence type="ECO:0000250" key="1">
    <source>
        <dbReference type="UniProtKB" id="Q914J5"/>
    </source>
</evidence>
<evidence type="ECO:0000269" key="2">
    <source>
    </source>
</evidence>
<evidence type="ECO:0000269" key="3">
    <source>
    </source>
</evidence>
<evidence type="ECO:0000303" key="4">
    <source>
    </source>
</evidence>
<evidence type="ECO:0000305" key="5">
    <source>
    </source>
</evidence>
<evidence type="ECO:0007744" key="6">
    <source>
        <dbReference type="PDB" id="3FBL"/>
    </source>
</evidence>
<evidence type="ECO:0007744" key="7">
    <source>
        <dbReference type="PDB" id="5W7G"/>
    </source>
</evidence>
<evidence type="ECO:0007829" key="8">
    <source>
        <dbReference type="PDB" id="3FBL"/>
    </source>
</evidence>
<feature type="chain" id="PRO_0000384555" description="Major capsid protein 2">
    <location>
        <begin position="1"/>
        <end position="132"/>
    </location>
</feature>
<feature type="helix" evidence="8">
    <location>
        <begin position="52"/>
        <end position="64"/>
    </location>
</feature>
<feature type="helix" evidence="8">
    <location>
        <begin position="69"/>
        <end position="71"/>
    </location>
</feature>
<feature type="helix" evidence="8">
    <location>
        <begin position="72"/>
        <end position="91"/>
    </location>
</feature>
<feature type="helix" evidence="8">
    <location>
        <begin position="96"/>
        <end position="111"/>
    </location>
</feature>
<feature type="helix" evidence="8">
    <location>
        <begin position="118"/>
        <end position="131"/>
    </location>
</feature>
<sequence length="132" mass="14998">MVNKKYRQDSKDRYQYKQYIYRSIGGIVPPEMAETVTANQTAQWEAGFTPYHKLRLAIKEICKTDGIPNIKWGMYIAFGEKLLKSYLKMKAGSASSDMIAEYINNAISAFSSRTGISQETAQKIADFITSNY</sequence>
<name>CAPS2_AFV1Y</name>
<dbReference type="EMBL" id="AJ567472">
    <property type="protein sequence ID" value="CAD98953.1"/>
    <property type="molecule type" value="Genomic_DNA"/>
</dbReference>
<dbReference type="RefSeq" id="YP_003749.1">
    <property type="nucleotide sequence ID" value="NC_005830.1"/>
</dbReference>
<dbReference type="PDB" id="3FBL">
    <property type="method" value="X-ray"/>
    <property type="resolution" value="1.95 A"/>
    <property type="chains" value="A=51-132"/>
</dbReference>
<dbReference type="PDB" id="5W7G">
    <property type="method" value="EM"/>
    <property type="resolution" value="4.50 A"/>
    <property type="chains" value="B/D/F/H/J/L/N/P/R/T/V/X/Z/b/d/f/h/j/l/n/p=1-132"/>
</dbReference>
<dbReference type="PDBsum" id="3FBL"/>
<dbReference type="PDBsum" id="5W7G"/>
<dbReference type="EMDB" id="EMD-8780"/>
<dbReference type="SMR" id="Q70LC7"/>
<dbReference type="KEGG" id="vg:2769168"/>
<dbReference type="EvolutionaryTrace" id="Q70LC7"/>
<dbReference type="Proteomes" id="UP000000514">
    <property type="component" value="Genome"/>
</dbReference>
<dbReference type="GO" id="GO:0019029">
    <property type="term" value="C:helical viral capsid"/>
    <property type="evidence" value="ECO:0000314"/>
    <property type="project" value="UniProtKB"/>
</dbReference>
<dbReference type="GO" id="GO:0003677">
    <property type="term" value="F:DNA binding"/>
    <property type="evidence" value="ECO:0000314"/>
    <property type="project" value="UniProtKB"/>
</dbReference>
<dbReference type="Gene3D" id="1.20.58.800">
    <property type="match status" value="1"/>
</dbReference>